<dbReference type="EC" id="2.4.2.7" evidence="1"/>
<dbReference type="EMBL" id="AM180355">
    <property type="protein sequence ID" value="CAJ69632.1"/>
    <property type="molecule type" value="Genomic_DNA"/>
</dbReference>
<dbReference type="RefSeq" id="WP_003426450.1">
    <property type="nucleotide sequence ID" value="NZ_JAUPES010000010.1"/>
</dbReference>
<dbReference type="RefSeq" id="YP_001089257.1">
    <property type="nucleotide sequence ID" value="NC_009089.1"/>
</dbReference>
<dbReference type="SMR" id="Q183I0"/>
<dbReference type="STRING" id="272563.CD630_27450"/>
<dbReference type="EnsemblBacteria" id="CAJ69632">
    <property type="protein sequence ID" value="CAJ69632"/>
    <property type="gene ID" value="CD630_27450"/>
</dbReference>
<dbReference type="KEGG" id="cdf:CD630_27450"/>
<dbReference type="KEGG" id="pdc:CDIF630_03008"/>
<dbReference type="PATRIC" id="fig|272563.120.peg.2892"/>
<dbReference type="eggNOG" id="COG0503">
    <property type="taxonomic scope" value="Bacteria"/>
</dbReference>
<dbReference type="OrthoDB" id="9803963at2"/>
<dbReference type="PhylomeDB" id="Q183I0"/>
<dbReference type="BioCyc" id="PDIF272563:G12WB-2903-MONOMER"/>
<dbReference type="UniPathway" id="UPA00588">
    <property type="reaction ID" value="UER00646"/>
</dbReference>
<dbReference type="Proteomes" id="UP000001978">
    <property type="component" value="Chromosome"/>
</dbReference>
<dbReference type="GO" id="GO:0005737">
    <property type="term" value="C:cytoplasm"/>
    <property type="evidence" value="ECO:0007669"/>
    <property type="project" value="UniProtKB-SubCell"/>
</dbReference>
<dbReference type="GO" id="GO:0002055">
    <property type="term" value="F:adenine binding"/>
    <property type="evidence" value="ECO:0007669"/>
    <property type="project" value="TreeGrafter"/>
</dbReference>
<dbReference type="GO" id="GO:0003999">
    <property type="term" value="F:adenine phosphoribosyltransferase activity"/>
    <property type="evidence" value="ECO:0007669"/>
    <property type="project" value="UniProtKB-UniRule"/>
</dbReference>
<dbReference type="GO" id="GO:0016208">
    <property type="term" value="F:AMP binding"/>
    <property type="evidence" value="ECO:0007669"/>
    <property type="project" value="TreeGrafter"/>
</dbReference>
<dbReference type="GO" id="GO:0006168">
    <property type="term" value="P:adenine salvage"/>
    <property type="evidence" value="ECO:0007669"/>
    <property type="project" value="InterPro"/>
</dbReference>
<dbReference type="GO" id="GO:0044209">
    <property type="term" value="P:AMP salvage"/>
    <property type="evidence" value="ECO:0007669"/>
    <property type="project" value="UniProtKB-UniRule"/>
</dbReference>
<dbReference type="GO" id="GO:0006166">
    <property type="term" value="P:purine ribonucleoside salvage"/>
    <property type="evidence" value="ECO:0007669"/>
    <property type="project" value="UniProtKB-KW"/>
</dbReference>
<dbReference type="CDD" id="cd06223">
    <property type="entry name" value="PRTases_typeI"/>
    <property type="match status" value="1"/>
</dbReference>
<dbReference type="FunFam" id="3.40.50.2020:FF:000004">
    <property type="entry name" value="Adenine phosphoribosyltransferase"/>
    <property type="match status" value="1"/>
</dbReference>
<dbReference type="Gene3D" id="3.40.50.2020">
    <property type="match status" value="1"/>
</dbReference>
<dbReference type="HAMAP" id="MF_00004">
    <property type="entry name" value="Aden_phosphoribosyltr"/>
    <property type="match status" value="1"/>
</dbReference>
<dbReference type="InterPro" id="IPR005764">
    <property type="entry name" value="Ade_phspho_trans"/>
</dbReference>
<dbReference type="InterPro" id="IPR000836">
    <property type="entry name" value="PRibTrfase_dom"/>
</dbReference>
<dbReference type="InterPro" id="IPR029057">
    <property type="entry name" value="PRTase-like"/>
</dbReference>
<dbReference type="InterPro" id="IPR050054">
    <property type="entry name" value="UPRTase/APRTase"/>
</dbReference>
<dbReference type="NCBIfam" id="TIGR01090">
    <property type="entry name" value="apt"/>
    <property type="match status" value="1"/>
</dbReference>
<dbReference type="NCBIfam" id="NF002633">
    <property type="entry name" value="PRK02304.1-2"/>
    <property type="match status" value="1"/>
</dbReference>
<dbReference type="NCBIfam" id="NF002634">
    <property type="entry name" value="PRK02304.1-3"/>
    <property type="match status" value="1"/>
</dbReference>
<dbReference type="NCBIfam" id="NF002636">
    <property type="entry name" value="PRK02304.1-5"/>
    <property type="match status" value="1"/>
</dbReference>
<dbReference type="PANTHER" id="PTHR32315">
    <property type="entry name" value="ADENINE PHOSPHORIBOSYLTRANSFERASE"/>
    <property type="match status" value="1"/>
</dbReference>
<dbReference type="PANTHER" id="PTHR32315:SF3">
    <property type="entry name" value="ADENINE PHOSPHORIBOSYLTRANSFERASE"/>
    <property type="match status" value="1"/>
</dbReference>
<dbReference type="Pfam" id="PF00156">
    <property type="entry name" value="Pribosyltran"/>
    <property type="match status" value="1"/>
</dbReference>
<dbReference type="SUPFAM" id="SSF53271">
    <property type="entry name" value="PRTase-like"/>
    <property type="match status" value="1"/>
</dbReference>
<gene>
    <name evidence="1" type="primary">apt</name>
    <name type="ordered locus">CD630_27450</name>
</gene>
<protein>
    <recommendedName>
        <fullName evidence="1">Adenine phosphoribosyltransferase</fullName>
        <shortName evidence="1">APRT</shortName>
        <ecNumber evidence="1">2.4.2.7</ecNumber>
    </recommendedName>
</protein>
<organism>
    <name type="scientific">Clostridioides difficile (strain 630)</name>
    <name type="common">Peptoclostridium difficile</name>
    <dbReference type="NCBI Taxonomy" id="272563"/>
    <lineage>
        <taxon>Bacteria</taxon>
        <taxon>Bacillati</taxon>
        <taxon>Bacillota</taxon>
        <taxon>Clostridia</taxon>
        <taxon>Peptostreptococcales</taxon>
        <taxon>Peptostreptococcaceae</taxon>
        <taxon>Clostridioides</taxon>
    </lineage>
</organism>
<sequence length="170" mass="18769">MDLKNFIRNIDDFPKPGIDFKDVTTLFKDGDAFKYAVDSIVEELKDKDVDLVIGPEARGFLMGTPVAYALGVGFVPIRKPGKLPGEVESYEYGLEYGTDTLEIHKDAIKKGQKVAIVDDLLATGGTMEAAAKLVEKLGGEVVSMQFLIELKFLNGREKLSNYDVNSLIKY</sequence>
<reference key="1">
    <citation type="journal article" date="2006" name="Nat. Genet.">
        <title>The multidrug-resistant human pathogen Clostridium difficile has a highly mobile, mosaic genome.</title>
        <authorList>
            <person name="Sebaihia M."/>
            <person name="Wren B.W."/>
            <person name="Mullany P."/>
            <person name="Fairweather N.F."/>
            <person name="Minton N."/>
            <person name="Stabler R."/>
            <person name="Thomson N.R."/>
            <person name="Roberts A.P."/>
            <person name="Cerdeno-Tarraga A.M."/>
            <person name="Wang H."/>
            <person name="Holden M.T.G."/>
            <person name="Wright A."/>
            <person name="Churcher C."/>
            <person name="Quail M.A."/>
            <person name="Baker S."/>
            <person name="Bason N."/>
            <person name="Brooks K."/>
            <person name="Chillingworth T."/>
            <person name="Cronin A."/>
            <person name="Davis P."/>
            <person name="Dowd L."/>
            <person name="Fraser A."/>
            <person name="Feltwell T."/>
            <person name="Hance Z."/>
            <person name="Holroyd S."/>
            <person name="Jagels K."/>
            <person name="Moule S."/>
            <person name="Mungall K."/>
            <person name="Price C."/>
            <person name="Rabbinowitsch E."/>
            <person name="Sharp S."/>
            <person name="Simmonds M."/>
            <person name="Stevens K."/>
            <person name="Unwin L."/>
            <person name="Whithead S."/>
            <person name="Dupuy B."/>
            <person name="Dougan G."/>
            <person name="Barrell B."/>
            <person name="Parkhill J."/>
        </authorList>
    </citation>
    <scope>NUCLEOTIDE SEQUENCE [LARGE SCALE GENOMIC DNA]</scope>
    <source>
        <strain>630</strain>
    </source>
</reference>
<evidence type="ECO:0000255" key="1">
    <source>
        <dbReference type="HAMAP-Rule" id="MF_00004"/>
    </source>
</evidence>
<proteinExistence type="inferred from homology"/>
<name>APT_CLOD6</name>
<comment type="function">
    <text evidence="1">Catalyzes a salvage reaction resulting in the formation of AMP, that is energically less costly than de novo synthesis.</text>
</comment>
<comment type="catalytic activity">
    <reaction evidence="1">
        <text>AMP + diphosphate = 5-phospho-alpha-D-ribose 1-diphosphate + adenine</text>
        <dbReference type="Rhea" id="RHEA:16609"/>
        <dbReference type="ChEBI" id="CHEBI:16708"/>
        <dbReference type="ChEBI" id="CHEBI:33019"/>
        <dbReference type="ChEBI" id="CHEBI:58017"/>
        <dbReference type="ChEBI" id="CHEBI:456215"/>
        <dbReference type="EC" id="2.4.2.7"/>
    </reaction>
</comment>
<comment type="pathway">
    <text evidence="1">Purine metabolism; AMP biosynthesis via salvage pathway; AMP from adenine: step 1/1.</text>
</comment>
<comment type="subunit">
    <text evidence="1">Homodimer.</text>
</comment>
<comment type="subcellular location">
    <subcellularLocation>
        <location evidence="1">Cytoplasm</location>
    </subcellularLocation>
</comment>
<comment type="similarity">
    <text evidence="1">Belongs to the purine/pyrimidine phosphoribosyltransferase family.</text>
</comment>
<feature type="chain" id="PRO_1000000275" description="Adenine phosphoribosyltransferase">
    <location>
        <begin position="1"/>
        <end position="170"/>
    </location>
</feature>
<accession>Q183I0</accession>
<keyword id="KW-0963">Cytoplasm</keyword>
<keyword id="KW-0328">Glycosyltransferase</keyword>
<keyword id="KW-0660">Purine salvage</keyword>
<keyword id="KW-1185">Reference proteome</keyword>
<keyword id="KW-0808">Transferase</keyword>